<organism>
    <name type="scientific">Mycolicibacterium paratuberculosis (strain ATCC BAA-968 / K-10)</name>
    <name type="common">Mycobacterium paratuberculosis</name>
    <dbReference type="NCBI Taxonomy" id="262316"/>
    <lineage>
        <taxon>Bacteria</taxon>
        <taxon>Bacillati</taxon>
        <taxon>Actinomycetota</taxon>
        <taxon>Actinomycetes</taxon>
        <taxon>Mycobacteriales</taxon>
        <taxon>Mycobacteriaceae</taxon>
        <taxon>Mycobacterium</taxon>
        <taxon>Mycobacterium avium complex (MAC)</taxon>
    </lineage>
</organism>
<reference key="1">
    <citation type="journal article" date="2005" name="Proc. Natl. Acad. Sci. U.S.A.">
        <title>The complete genome sequence of Mycobacterium avium subspecies paratuberculosis.</title>
        <authorList>
            <person name="Li L."/>
            <person name="Bannantine J.P."/>
            <person name="Zhang Q."/>
            <person name="Amonsin A."/>
            <person name="May B.J."/>
            <person name="Alt D."/>
            <person name="Banerji N."/>
            <person name="Kanjilal S."/>
            <person name="Kapur V."/>
        </authorList>
    </citation>
    <scope>NUCLEOTIDE SEQUENCE [LARGE SCALE GENOMIC DNA]</scope>
    <source>
        <strain>ATCC BAA-968 / K-10</strain>
    </source>
</reference>
<gene>
    <name evidence="1" type="primary">alaS</name>
    <name type="ordered locus">MAP_1077</name>
</gene>
<comment type="function">
    <text evidence="1">Catalyzes the attachment of alanine to tRNA(Ala) in a two-step reaction: alanine is first activated by ATP to form Ala-AMP and then transferred to the acceptor end of tRNA(Ala). Also edits incorrectly charged Ser-tRNA(Ala) and Gly-tRNA(Ala) via its editing domain.</text>
</comment>
<comment type="catalytic activity">
    <reaction evidence="1">
        <text>tRNA(Ala) + L-alanine + ATP = L-alanyl-tRNA(Ala) + AMP + diphosphate</text>
        <dbReference type="Rhea" id="RHEA:12540"/>
        <dbReference type="Rhea" id="RHEA-COMP:9657"/>
        <dbReference type="Rhea" id="RHEA-COMP:9923"/>
        <dbReference type="ChEBI" id="CHEBI:30616"/>
        <dbReference type="ChEBI" id="CHEBI:33019"/>
        <dbReference type="ChEBI" id="CHEBI:57972"/>
        <dbReference type="ChEBI" id="CHEBI:78442"/>
        <dbReference type="ChEBI" id="CHEBI:78497"/>
        <dbReference type="ChEBI" id="CHEBI:456215"/>
        <dbReference type="EC" id="6.1.1.7"/>
    </reaction>
</comment>
<comment type="cofactor">
    <cofactor evidence="1">
        <name>Zn(2+)</name>
        <dbReference type="ChEBI" id="CHEBI:29105"/>
    </cofactor>
    <text evidence="1">Binds 1 zinc ion per subunit.</text>
</comment>
<comment type="subcellular location">
    <subcellularLocation>
        <location evidence="1">Cytoplasm</location>
    </subcellularLocation>
</comment>
<comment type="domain">
    <text evidence="1">Consists of three domains; the N-terminal catalytic domain, the editing domain and the C-terminal C-Ala domain. The editing domain removes incorrectly charged amino acids, while the C-Ala domain, along with tRNA(Ala), serves as a bridge to cooperatively bring together the editing and aminoacylation centers thus stimulating deacylation of misacylated tRNAs.</text>
</comment>
<comment type="similarity">
    <text evidence="1">Belongs to the class-II aminoacyl-tRNA synthetase family.</text>
</comment>
<evidence type="ECO:0000255" key="1">
    <source>
        <dbReference type="HAMAP-Rule" id="MF_00036"/>
    </source>
</evidence>
<feature type="chain" id="PRO_0000075146" description="Alanine--tRNA ligase">
    <location>
        <begin position="1"/>
        <end position="900"/>
    </location>
</feature>
<feature type="binding site" evidence="1">
    <location>
        <position position="580"/>
    </location>
    <ligand>
        <name>Zn(2+)</name>
        <dbReference type="ChEBI" id="CHEBI:29105"/>
    </ligand>
</feature>
<feature type="binding site" evidence="1">
    <location>
        <position position="584"/>
    </location>
    <ligand>
        <name>Zn(2+)</name>
        <dbReference type="ChEBI" id="CHEBI:29105"/>
    </ligand>
</feature>
<feature type="binding site" evidence="1">
    <location>
        <position position="683"/>
    </location>
    <ligand>
        <name>Zn(2+)</name>
        <dbReference type="ChEBI" id="CHEBI:29105"/>
    </ligand>
</feature>
<feature type="binding site" evidence="1">
    <location>
        <position position="687"/>
    </location>
    <ligand>
        <name>Zn(2+)</name>
        <dbReference type="ChEBI" id="CHEBI:29105"/>
    </ligand>
</feature>
<keyword id="KW-0030">Aminoacyl-tRNA synthetase</keyword>
<keyword id="KW-0067">ATP-binding</keyword>
<keyword id="KW-0963">Cytoplasm</keyword>
<keyword id="KW-0436">Ligase</keyword>
<keyword id="KW-0479">Metal-binding</keyword>
<keyword id="KW-0547">Nucleotide-binding</keyword>
<keyword id="KW-0648">Protein biosynthesis</keyword>
<keyword id="KW-1185">Reference proteome</keyword>
<keyword id="KW-0694">RNA-binding</keyword>
<keyword id="KW-0820">tRNA-binding</keyword>
<keyword id="KW-0862">Zinc</keyword>
<dbReference type="EC" id="6.1.1.7" evidence="1"/>
<dbReference type="EMBL" id="AE016958">
    <property type="protein sequence ID" value="AAS03394.1"/>
    <property type="molecule type" value="Genomic_DNA"/>
</dbReference>
<dbReference type="RefSeq" id="WP_003872646.1">
    <property type="nucleotide sequence ID" value="NZ_CP106873.1"/>
</dbReference>
<dbReference type="SMR" id="P61705"/>
<dbReference type="STRING" id="262316.MAP_1077"/>
<dbReference type="KEGG" id="mpa:MAP_1077"/>
<dbReference type="eggNOG" id="COG0013">
    <property type="taxonomic scope" value="Bacteria"/>
</dbReference>
<dbReference type="HOGENOM" id="CLU_004485_1_1_11"/>
<dbReference type="Proteomes" id="UP000000580">
    <property type="component" value="Chromosome"/>
</dbReference>
<dbReference type="GO" id="GO:0005829">
    <property type="term" value="C:cytosol"/>
    <property type="evidence" value="ECO:0007669"/>
    <property type="project" value="TreeGrafter"/>
</dbReference>
<dbReference type="GO" id="GO:0004813">
    <property type="term" value="F:alanine-tRNA ligase activity"/>
    <property type="evidence" value="ECO:0007669"/>
    <property type="project" value="UniProtKB-UniRule"/>
</dbReference>
<dbReference type="GO" id="GO:0002161">
    <property type="term" value="F:aminoacyl-tRNA deacylase activity"/>
    <property type="evidence" value="ECO:0007669"/>
    <property type="project" value="TreeGrafter"/>
</dbReference>
<dbReference type="GO" id="GO:0005524">
    <property type="term" value="F:ATP binding"/>
    <property type="evidence" value="ECO:0007669"/>
    <property type="project" value="UniProtKB-UniRule"/>
</dbReference>
<dbReference type="GO" id="GO:0000049">
    <property type="term" value="F:tRNA binding"/>
    <property type="evidence" value="ECO:0007669"/>
    <property type="project" value="UniProtKB-KW"/>
</dbReference>
<dbReference type="GO" id="GO:0008270">
    <property type="term" value="F:zinc ion binding"/>
    <property type="evidence" value="ECO:0007669"/>
    <property type="project" value="UniProtKB-UniRule"/>
</dbReference>
<dbReference type="GO" id="GO:0006419">
    <property type="term" value="P:alanyl-tRNA aminoacylation"/>
    <property type="evidence" value="ECO:0007669"/>
    <property type="project" value="UniProtKB-UniRule"/>
</dbReference>
<dbReference type="CDD" id="cd00673">
    <property type="entry name" value="AlaRS_core"/>
    <property type="match status" value="1"/>
</dbReference>
<dbReference type="FunFam" id="2.40.30.130:FF:000011">
    <property type="entry name" value="Alanine--tRNA ligase"/>
    <property type="match status" value="1"/>
</dbReference>
<dbReference type="FunFam" id="3.10.310.40:FF:000001">
    <property type="entry name" value="Alanine--tRNA ligase"/>
    <property type="match status" value="1"/>
</dbReference>
<dbReference type="FunFam" id="3.30.54.20:FF:000001">
    <property type="entry name" value="Alanine--tRNA ligase"/>
    <property type="match status" value="1"/>
</dbReference>
<dbReference type="FunFam" id="3.30.930.10:FF:000004">
    <property type="entry name" value="Alanine--tRNA ligase"/>
    <property type="match status" value="1"/>
</dbReference>
<dbReference type="FunFam" id="3.30.980.10:FF:000004">
    <property type="entry name" value="Alanine--tRNA ligase, cytoplasmic"/>
    <property type="match status" value="1"/>
</dbReference>
<dbReference type="Gene3D" id="2.40.30.130">
    <property type="match status" value="1"/>
</dbReference>
<dbReference type="Gene3D" id="3.10.310.40">
    <property type="match status" value="1"/>
</dbReference>
<dbReference type="Gene3D" id="3.30.54.20">
    <property type="match status" value="1"/>
</dbReference>
<dbReference type="Gene3D" id="6.10.250.550">
    <property type="match status" value="1"/>
</dbReference>
<dbReference type="Gene3D" id="3.30.930.10">
    <property type="entry name" value="Bira Bifunctional Protein, Domain 2"/>
    <property type="match status" value="1"/>
</dbReference>
<dbReference type="Gene3D" id="3.30.980.10">
    <property type="entry name" value="Threonyl-trna Synthetase, Chain A, domain 2"/>
    <property type="match status" value="1"/>
</dbReference>
<dbReference type="HAMAP" id="MF_00036_B">
    <property type="entry name" value="Ala_tRNA_synth_B"/>
    <property type="match status" value="1"/>
</dbReference>
<dbReference type="InterPro" id="IPR045864">
    <property type="entry name" value="aa-tRNA-synth_II/BPL/LPL"/>
</dbReference>
<dbReference type="InterPro" id="IPR002318">
    <property type="entry name" value="Ala-tRNA-lgiase_IIc"/>
</dbReference>
<dbReference type="InterPro" id="IPR018162">
    <property type="entry name" value="Ala-tRNA-ligase_IIc_anticod-bd"/>
</dbReference>
<dbReference type="InterPro" id="IPR018165">
    <property type="entry name" value="Ala-tRNA-synth_IIc_core"/>
</dbReference>
<dbReference type="InterPro" id="IPR018164">
    <property type="entry name" value="Ala-tRNA-synth_IIc_N"/>
</dbReference>
<dbReference type="InterPro" id="IPR050058">
    <property type="entry name" value="Ala-tRNA_ligase"/>
</dbReference>
<dbReference type="InterPro" id="IPR023033">
    <property type="entry name" value="Ala_tRNA_ligase_euk/bac"/>
</dbReference>
<dbReference type="InterPro" id="IPR003156">
    <property type="entry name" value="DHHA1_dom"/>
</dbReference>
<dbReference type="InterPro" id="IPR018163">
    <property type="entry name" value="Thr/Ala-tRNA-synth_IIc_edit"/>
</dbReference>
<dbReference type="InterPro" id="IPR009000">
    <property type="entry name" value="Transl_B-barrel_sf"/>
</dbReference>
<dbReference type="InterPro" id="IPR012947">
    <property type="entry name" value="tRNA_SAD"/>
</dbReference>
<dbReference type="NCBIfam" id="TIGR00344">
    <property type="entry name" value="alaS"/>
    <property type="match status" value="1"/>
</dbReference>
<dbReference type="PANTHER" id="PTHR11777:SF9">
    <property type="entry name" value="ALANINE--TRNA LIGASE, CYTOPLASMIC"/>
    <property type="match status" value="1"/>
</dbReference>
<dbReference type="PANTHER" id="PTHR11777">
    <property type="entry name" value="ALANYL-TRNA SYNTHETASE"/>
    <property type="match status" value="1"/>
</dbReference>
<dbReference type="Pfam" id="PF02272">
    <property type="entry name" value="DHHA1"/>
    <property type="match status" value="1"/>
</dbReference>
<dbReference type="Pfam" id="PF01411">
    <property type="entry name" value="tRNA-synt_2c"/>
    <property type="match status" value="1"/>
</dbReference>
<dbReference type="Pfam" id="PF07973">
    <property type="entry name" value="tRNA_SAD"/>
    <property type="match status" value="1"/>
</dbReference>
<dbReference type="PRINTS" id="PR00980">
    <property type="entry name" value="TRNASYNTHALA"/>
</dbReference>
<dbReference type="SMART" id="SM00863">
    <property type="entry name" value="tRNA_SAD"/>
    <property type="match status" value="1"/>
</dbReference>
<dbReference type="SUPFAM" id="SSF55681">
    <property type="entry name" value="Class II aaRS and biotin synthetases"/>
    <property type="match status" value="1"/>
</dbReference>
<dbReference type="SUPFAM" id="SSF101353">
    <property type="entry name" value="Putative anticodon-binding domain of alanyl-tRNA synthetase (AlaRS)"/>
    <property type="match status" value="1"/>
</dbReference>
<dbReference type="SUPFAM" id="SSF55186">
    <property type="entry name" value="ThrRS/AlaRS common domain"/>
    <property type="match status" value="1"/>
</dbReference>
<dbReference type="SUPFAM" id="SSF50447">
    <property type="entry name" value="Translation proteins"/>
    <property type="match status" value="1"/>
</dbReference>
<dbReference type="PROSITE" id="PS50860">
    <property type="entry name" value="AA_TRNA_LIGASE_II_ALA"/>
    <property type="match status" value="1"/>
</dbReference>
<protein>
    <recommendedName>
        <fullName evidence="1">Alanine--tRNA ligase</fullName>
        <ecNumber evidence="1">6.1.1.7</ecNumber>
    </recommendedName>
    <alternativeName>
        <fullName evidence="1">Alanyl-tRNA synthetase</fullName>
        <shortName evidence="1">AlaRS</shortName>
    </alternativeName>
</protein>
<name>SYA_MYCPA</name>
<proteinExistence type="inferred from homology"/>
<accession>P61705</accession>
<sequence>MQTHEIRKRFLDHFVKAGHTEVPSASVILDDPNLLFVNAGMVQFVPYFLGARTPPYPTATSIQKCIRTPDIDEVGITTRHNTFFQMAGNFSFGDYFKREAIELAWTLLTGSVEQGGYGLDPERIWTTVYFDDDEAVRLWQEIAGLPAERIQRRGMEDNYWSMGIPGPCGPSSEIYYDRGEEFGVGGGPIANEDRYVELWNLVFMQSERGEGTSKTDFEILGPLPRKNIDTGMGVERVAFVLQGVHNVYETDLLRPVIDAVAARAPRPYDAGNHDDDVRYRIIADHSRTAAILIGDGVTPGNDGRGYVLRRLLRRVIRSARLLDIEGPIVGDLMATVRDAMGPSYPELVTDFDRIARIAVAEETAFNRTLAAGSKLFDEVASTTKATGAKSISGSDAFTLHDTYGFPIELTLEMASEAGLQVDEVGFRELMAEQRRRAKADAAARKHAHADLTAYRELVDAGPTEFTGFDELSSEARILGIFVDGKRVPVVTHGGDGADRVELVLDRTPLYAESGGQIADEGTISGTGAGESARAAVTDVQKIAKTLWVHRVNVESGEFVEGDTVIAAVDPQWRRGATQGHSGTHMVHAALRQVLGPNAVQAGSLNRPGYLRFDFNWQGPLTEEQRTQIEEVTNQAVQADFEVHTFTEQLEKAKAMGAIALFGESYPEQVRVVEIGGPFSLELCGGTHVHNSAQIGPVTILGESSVGSGVRRVEAYVGLDSFRHLAKERALMAGLASSLKVPSEEVPARVANLVERLRAAEKELERMRLASARAAAGNAAAGAERIGNVRVVAQRMSGGMTAADLRSLVGDIRGKLGSDPAVVALIAEGEGGSVPYAVAANPAAQDLGIRANDLVKQLAAPVDGRGGGKADLAQGSGKDPAGIDAALDAVRSEIAAIARVG</sequence>